<reference key="1">
    <citation type="journal article" date="2001" name="Lancet">
        <title>Whole genome sequencing of meticillin-resistant Staphylococcus aureus.</title>
        <authorList>
            <person name="Kuroda M."/>
            <person name="Ohta T."/>
            <person name="Uchiyama I."/>
            <person name="Baba T."/>
            <person name="Yuzawa H."/>
            <person name="Kobayashi I."/>
            <person name="Cui L."/>
            <person name="Oguchi A."/>
            <person name="Aoki K."/>
            <person name="Nagai Y."/>
            <person name="Lian J.-Q."/>
            <person name="Ito T."/>
            <person name="Kanamori M."/>
            <person name="Matsumaru H."/>
            <person name="Maruyama A."/>
            <person name="Murakami H."/>
            <person name="Hosoyama A."/>
            <person name="Mizutani-Ui Y."/>
            <person name="Takahashi N.K."/>
            <person name="Sawano T."/>
            <person name="Inoue R."/>
            <person name="Kaito C."/>
            <person name="Sekimizu K."/>
            <person name="Hirakawa H."/>
            <person name="Kuhara S."/>
            <person name="Goto S."/>
            <person name="Yabuzaki J."/>
            <person name="Kanehisa M."/>
            <person name="Yamashita A."/>
            <person name="Oshima K."/>
            <person name="Furuya K."/>
            <person name="Yoshino C."/>
            <person name="Shiba T."/>
            <person name="Hattori M."/>
            <person name="Ogasawara N."/>
            <person name="Hayashi H."/>
            <person name="Hiramatsu K."/>
        </authorList>
    </citation>
    <scope>NUCLEOTIDE SEQUENCE [LARGE SCALE GENOMIC DNA]</scope>
    <source>
        <strain>N315</strain>
    </source>
</reference>
<reference key="2">
    <citation type="journal article" date="2005" name="J. Microbiol. Methods">
        <title>Correlation of proteomic and transcriptomic profiles of Staphylococcus aureus during the post-exponential phase of growth.</title>
        <authorList>
            <person name="Scherl A."/>
            <person name="Francois P."/>
            <person name="Bento M."/>
            <person name="Deshusses J.M."/>
            <person name="Charbonnier Y."/>
            <person name="Converset V."/>
            <person name="Huyghe A."/>
            <person name="Walter N."/>
            <person name="Hoogland C."/>
            <person name="Appel R.D."/>
            <person name="Sanchez J.-C."/>
            <person name="Zimmermann-Ivol C.G."/>
            <person name="Corthals G.L."/>
            <person name="Hochstrasser D.F."/>
            <person name="Schrenzel J."/>
        </authorList>
    </citation>
    <scope>IDENTIFICATION BY MASS SPECTROMETRY</scope>
    <source>
        <strain>N315</strain>
    </source>
</reference>
<reference key="3">
    <citation type="submission" date="2007-10" db="UniProtKB">
        <title>Shotgun proteomic analysis of total and membrane protein extracts of S. aureus strain N315.</title>
        <authorList>
            <person name="Vaezzadeh A.R."/>
            <person name="Deshusses J."/>
            <person name="Lescuyer P."/>
            <person name="Hochstrasser D.F."/>
        </authorList>
    </citation>
    <scope>IDENTIFICATION BY MASS SPECTROMETRY [LARGE SCALE ANALYSIS]</scope>
    <source>
        <strain>N315</strain>
    </source>
</reference>
<dbReference type="EC" id="3.2.-.-"/>
<dbReference type="EMBL" id="BA000018">
    <property type="protein sequence ID" value="BAB43660.1"/>
    <property type="molecule type" value="Genomic_DNA"/>
</dbReference>
<dbReference type="PIR" id="B90062">
    <property type="entry name" value="B90062"/>
</dbReference>
<dbReference type="RefSeq" id="WP_000751263.1">
    <property type="nucleotide sequence ID" value="NC_002745.2"/>
</dbReference>
<dbReference type="SMR" id="P99160"/>
<dbReference type="CAZy" id="GH23">
    <property type="family name" value="Glycoside Hydrolase Family 23"/>
</dbReference>
<dbReference type="EnsemblBacteria" id="BAB43660">
    <property type="protein sequence ID" value="BAB43660"/>
    <property type="gene ID" value="BAB43660"/>
</dbReference>
<dbReference type="KEGG" id="sau:SA2356"/>
<dbReference type="HOGENOM" id="CLU_099865_0_0_9"/>
<dbReference type="GO" id="GO:0005576">
    <property type="term" value="C:extracellular region"/>
    <property type="evidence" value="ECO:0007669"/>
    <property type="project" value="UniProtKB-SubCell"/>
</dbReference>
<dbReference type="GO" id="GO:0016798">
    <property type="term" value="F:hydrolase activity, acting on glycosyl bonds"/>
    <property type="evidence" value="ECO:0007669"/>
    <property type="project" value="UniProtKB-KW"/>
</dbReference>
<dbReference type="Gene3D" id="1.10.530.10">
    <property type="match status" value="1"/>
</dbReference>
<dbReference type="InterPro" id="IPR023346">
    <property type="entry name" value="Lysozyme-like_dom_sf"/>
</dbReference>
<dbReference type="InterPro" id="IPR008258">
    <property type="entry name" value="Transglycosylase_SLT_dom_1"/>
</dbReference>
<dbReference type="Pfam" id="PF01464">
    <property type="entry name" value="SLT"/>
    <property type="match status" value="1"/>
</dbReference>
<dbReference type="SUPFAM" id="SSF53955">
    <property type="entry name" value="Lysozyme-like"/>
    <property type="match status" value="1"/>
</dbReference>
<gene>
    <name type="primary">isaA</name>
    <name type="ordered locus">SA2356</name>
</gene>
<organism>
    <name type="scientific">Staphylococcus aureus (strain N315)</name>
    <dbReference type="NCBI Taxonomy" id="158879"/>
    <lineage>
        <taxon>Bacteria</taxon>
        <taxon>Bacillati</taxon>
        <taxon>Bacillota</taxon>
        <taxon>Bacilli</taxon>
        <taxon>Bacillales</taxon>
        <taxon>Staphylococcaceae</taxon>
        <taxon>Staphylococcus</taxon>
    </lineage>
</organism>
<keyword id="KW-0326">Glycosidase</keyword>
<keyword id="KW-0378">Hydrolase</keyword>
<keyword id="KW-0964">Secreted</keyword>
<keyword id="KW-0732">Signal</keyword>
<accession>P99160</accession>
<accession>Q99R69</accession>
<feature type="signal peptide" evidence="1">
    <location>
        <begin position="1"/>
        <end position="29"/>
    </location>
</feature>
<feature type="chain" id="PRO_0000021527" description="Probable transglycosylase IsaA">
    <location>
        <begin position="30"/>
        <end position="233"/>
    </location>
</feature>
<comment type="function">
    <text evidence="1">Is able to cleave peptidoglycan.</text>
</comment>
<comment type="subcellular location">
    <subcellularLocation>
        <location evidence="1">Secreted</location>
    </subcellularLocation>
</comment>
<comment type="similarity">
    <text evidence="2">Belongs to the transglycosylase family. IsaA subfamily.</text>
</comment>
<name>ISAA_STAAN</name>
<sequence>MKKTIMASSLAVALGVTGYAAGTGHQAHAAEVNVDQAHLVDLAHNHQDQLNAAPIKDGAYDIHFVKDGFQYNFTSNGTTWSWSYEAANGQTAGFSNVAGADYTTSYNQGSDVQSVSYNAQSSNSNVEAVSAPTYHNYSTSTTSSSVRLSNGNTAGATGSSAAQIMAQRTGVSASTWAAIIARESNGQVNAYNPSGASGLFQTMPGWGPTNTVDQQINAAVKAYKAQGLGAWGF</sequence>
<protein>
    <recommendedName>
        <fullName>Probable transglycosylase IsaA</fullName>
        <ecNumber>3.2.-.-</ecNumber>
    </recommendedName>
    <alternativeName>
        <fullName>Immunodominant staphylococcal antigen A</fullName>
    </alternativeName>
</protein>
<proteinExistence type="evidence at protein level"/>
<evidence type="ECO:0000250" key="1"/>
<evidence type="ECO:0000305" key="2"/>